<organism>
    <name type="scientific">Cutibacterium acnes (strain DSM 16379 / KPA171202)</name>
    <name type="common">Propionibacterium acnes</name>
    <dbReference type="NCBI Taxonomy" id="267747"/>
    <lineage>
        <taxon>Bacteria</taxon>
        <taxon>Bacillati</taxon>
        <taxon>Actinomycetota</taxon>
        <taxon>Actinomycetes</taxon>
        <taxon>Propionibacteriales</taxon>
        <taxon>Propionibacteriaceae</taxon>
        <taxon>Cutibacterium</taxon>
    </lineage>
</organism>
<gene>
    <name evidence="2" type="primary">argF</name>
    <name type="ordered locus">PPA0584</name>
</gene>
<accession>Q6AA77</accession>
<reference key="1">
    <citation type="journal article" date="2004" name="Science">
        <title>The complete genome sequence of Propionibacterium acnes, a commensal of human skin.</title>
        <authorList>
            <person name="Brueggemann H."/>
            <person name="Henne A."/>
            <person name="Hoster F."/>
            <person name="Liesegang H."/>
            <person name="Wiezer A."/>
            <person name="Strittmatter A."/>
            <person name="Hujer S."/>
            <person name="Duerre P."/>
            <person name="Gottschalk G."/>
        </authorList>
    </citation>
    <scope>NUCLEOTIDE SEQUENCE [LARGE SCALE GENOMIC DNA]</scope>
    <source>
        <strain>DSM 16379 / KPA171202</strain>
    </source>
</reference>
<evidence type="ECO:0000250" key="1"/>
<evidence type="ECO:0000255" key="2">
    <source>
        <dbReference type="HAMAP-Rule" id="MF_01109"/>
    </source>
</evidence>
<dbReference type="EC" id="2.1.3.3" evidence="2"/>
<dbReference type="EMBL" id="AE017283">
    <property type="protein sequence ID" value="AAT82339.1"/>
    <property type="molecule type" value="Genomic_DNA"/>
</dbReference>
<dbReference type="RefSeq" id="WP_002518130.1">
    <property type="nucleotide sequence ID" value="NZ_CP025935.1"/>
</dbReference>
<dbReference type="SMR" id="Q6AA77"/>
<dbReference type="EnsemblBacteria" id="AAT82339">
    <property type="protein sequence ID" value="AAT82339"/>
    <property type="gene ID" value="PPA0584"/>
</dbReference>
<dbReference type="KEGG" id="pac:PPA0584"/>
<dbReference type="eggNOG" id="COG0078">
    <property type="taxonomic scope" value="Bacteria"/>
</dbReference>
<dbReference type="HOGENOM" id="CLU_043846_3_1_11"/>
<dbReference type="UniPathway" id="UPA00068">
    <property type="reaction ID" value="UER00112"/>
</dbReference>
<dbReference type="Proteomes" id="UP000000603">
    <property type="component" value="Chromosome"/>
</dbReference>
<dbReference type="GO" id="GO:0005737">
    <property type="term" value="C:cytoplasm"/>
    <property type="evidence" value="ECO:0007669"/>
    <property type="project" value="UniProtKB-SubCell"/>
</dbReference>
<dbReference type="GO" id="GO:0016597">
    <property type="term" value="F:amino acid binding"/>
    <property type="evidence" value="ECO:0007669"/>
    <property type="project" value="InterPro"/>
</dbReference>
<dbReference type="GO" id="GO:0004585">
    <property type="term" value="F:ornithine carbamoyltransferase activity"/>
    <property type="evidence" value="ECO:0007669"/>
    <property type="project" value="UniProtKB-UniRule"/>
</dbReference>
<dbReference type="GO" id="GO:0042450">
    <property type="term" value="P:arginine biosynthetic process via ornithine"/>
    <property type="evidence" value="ECO:0007669"/>
    <property type="project" value="TreeGrafter"/>
</dbReference>
<dbReference type="GO" id="GO:0019240">
    <property type="term" value="P:citrulline biosynthetic process"/>
    <property type="evidence" value="ECO:0007669"/>
    <property type="project" value="TreeGrafter"/>
</dbReference>
<dbReference type="GO" id="GO:0006526">
    <property type="term" value="P:L-arginine biosynthetic process"/>
    <property type="evidence" value="ECO:0007669"/>
    <property type="project" value="UniProtKB-UniRule"/>
</dbReference>
<dbReference type="FunFam" id="3.40.50.1370:FF:000008">
    <property type="entry name" value="Ornithine carbamoyltransferase"/>
    <property type="match status" value="1"/>
</dbReference>
<dbReference type="Gene3D" id="3.40.50.1370">
    <property type="entry name" value="Aspartate/ornithine carbamoyltransferase"/>
    <property type="match status" value="2"/>
</dbReference>
<dbReference type="HAMAP" id="MF_01109">
    <property type="entry name" value="OTCase"/>
    <property type="match status" value="1"/>
</dbReference>
<dbReference type="InterPro" id="IPR006132">
    <property type="entry name" value="Asp/Orn_carbamoyltranf_P-bd"/>
</dbReference>
<dbReference type="InterPro" id="IPR006130">
    <property type="entry name" value="Asp/Orn_carbamoylTrfase"/>
</dbReference>
<dbReference type="InterPro" id="IPR036901">
    <property type="entry name" value="Asp/Orn_carbamoylTrfase_sf"/>
</dbReference>
<dbReference type="InterPro" id="IPR006131">
    <property type="entry name" value="Asp_carbamoyltransf_Asp/Orn-bd"/>
</dbReference>
<dbReference type="InterPro" id="IPR002292">
    <property type="entry name" value="Orn/put_carbamltrans"/>
</dbReference>
<dbReference type="InterPro" id="IPR024904">
    <property type="entry name" value="OTCase_ArgI"/>
</dbReference>
<dbReference type="NCBIfam" id="TIGR00658">
    <property type="entry name" value="orni_carb_tr"/>
    <property type="match status" value="1"/>
</dbReference>
<dbReference type="NCBIfam" id="NF002470">
    <property type="entry name" value="PRK01713.1"/>
    <property type="match status" value="1"/>
</dbReference>
<dbReference type="PANTHER" id="PTHR45753:SF2">
    <property type="entry name" value="ORNITHINE CARBAMOYLTRANSFERASE"/>
    <property type="match status" value="1"/>
</dbReference>
<dbReference type="PANTHER" id="PTHR45753">
    <property type="entry name" value="ORNITHINE CARBAMOYLTRANSFERASE, MITOCHONDRIAL"/>
    <property type="match status" value="1"/>
</dbReference>
<dbReference type="Pfam" id="PF00185">
    <property type="entry name" value="OTCace"/>
    <property type="match status" value="1"/>
</dbReference>
<dbReference type="Pfam" id="PF02729">
    <property type="entry name" value="OTCace_N"/>
    <property type="match status" value="1"/>
</dbReference>
<dbReference type="PRINTS" id="PR00100">
    <property type="entry name" value="AOTCASE"/>
</dbReference>
<dbReference type="PRINTS" id="PR00102">
    <property type="entry name" value="OTCASE"/>
</dbReference>
<dbReference type="SUPFAM" id="SSF53671">
    <property type="entry name" value="Aspartate/ornithine carbamoyltransferase"/>
    <property type="match status" value="1"/>
</dbReference>
<dbReference type="PROSITE" id="PS00097">
    <property type="entry name" value="CARBAMOYLTRANSFERASE"/>
    <property type="match status" value="1"/>
</dbReference>
<name>OTC_CUTAK</name>
<keyword id="KW-0028">Amino-acid biosynthesis</keyword>
<keyword id="KW-0055">Arginine biosynthesis</keyword>
<keyword id="KW-0963">Cytoplasm</keyword>
<keyword id="KW-0808">Transferase</keyword>
<comment type="function">
    <text evidence="1">Reversibly catalyzes the transfer of the carbamoyl group from carbamoyl phosphate (CP) to the N(epsilon) atom of ornithine (ORN) to produce L-citrulline.</text>
</comment>
<comment type="catalytic activity">
    <reaction evidence="2">
        <text>carbamoyl phosphate + L-ornithine = L-citrulline + phosphate + H(+)</text>
        <dbReference type="Rhea" id="RHEA:19513"/>
        <dbReference type="ChEBI" id="CHEBI:15378"/>
        <dbReference type="ChEBI" id="CHEBI:43474"/>
        <dbReference type="ChEBI" id="CHEBI:46911"/>
        <dbReference type="ChEBI" id="CHEBI:57743"/>
        <dbReference type="ChEBI" id="CHEBI:58228"/>
        <dbReference type="EC" id="2.1.3.3"/>
    </reaction>
</comment>
<comment type="pathway">
    <text evidence="2">Amino-acid biosynthesis; L-arginine biosynthesis; L-arginine from L-ornithine and carbamoyl phosphate: step 1/3.</text>
</comment>
<comment type="subcellular location">
    <subcellularLocation>
        <location evidence="2">Cytoplasm</location>
    </subcellularLocation>
</comment>
<comment type="similarity">
    <text evidence="2">Belongs to the aspartate/ornithine carbamoyltransferase superfamily. OTCase family.</text>
</comment>
<proteinExistence type="inferred from homology"/>
<protein>
    <recommendedName>
        <fullName evidence="2">Ornithine carbamoyltransferase</fullName>
        <shortName evidence="2">OTCase</shortName>
        <ecNumber evidence="2">2.1.3.3</ecNumber>
    </recommendedName>
</protein>
<feature type="chain" id="PRO_0000112981" description="Ornithine carbamoyltransferase">
    <location>
        <begin position="1"/>
        <end position="334"/>
    </location>
</feature>
<feature type="binding site" evidence="2">
    <location>
        <begin position="57"/>
        <end position="60"/>
    </location>
    <ligand>
        <name>carbamoyl phosphate</name>
        <dbReference type="ChEBI" id="CHEBI:58228"/>
    </ligand>
</feature>
<feature type="binding site" evidence="2">
    <location>
        <position position="108"/>
    </location>
    <ligand>
        <name>carbamoyl phosphate</name>
        <dbReference type="ChEBI" id="CHEBI:58228"/>
    </ligand>
</feature>
<feature type="binding site" evidence="2">
    <location>
        <begin position="135"/>
        <end position="138"/>
    </location>
    <ligand>
        <name>carbamoyl phosphate</name>
        <dbReference type="ChEBI" id="CHEBI:58228"/>
    </ligand>
</feature>
<feature type="binding site" evidence="2">
    <location>
        <position position="168"/>
    </location>
    <ligand>
        <name>L-ornithine</name>
        <dbReference type="ChEBI" id="CHEBI:46911"/>
    </ligand>
</feature>
<feature type="binding site" evidence="2">
    <location>
        <position position="232"/>
    </location>
    <ligand>
        <name>L-ornithine</name>
        <dbReference type="ChEBI" id="CHEBI:46911"/>
    </ligand>
</feature>
<feature type="binding site" evidence="2">
    <location>
        <begin position="236"/>
        <end position="237"/>
    </location>
    <ligand>
        <name>L-ornithine</name>
        <dbReference type="ChEBI" id="CHEBI:46911"/>
    </ligand>
</feature>
<feature type="binding site" evidence="2">
    <location>
        <begin position="274"/>
        <end position="275"/>
    </location>
    <ligand>
        <name>carbamoyl phosphate</name>
        <dbReference type="ChEBI" id="CHEBI:58228"/>
    </ligand>
</feature>
<feature type="binding site" evidence="2">
    <location>
        <position position="321"/>
    </location>
    <ligand>
        <name>carbamoyl phosphate</name>
        <dbReference type="ChEBI" id="CHEBI:58228"/>
    </ligand>
</feature>
<sequence>MAFNLKNRHLLSLAHHSTEEIKFLVGLAADLKEAKYCGTEQPLLKGKNIALIFEKASTRTRCAFEVAAHDQGAHVTYLGPSGSHIGHKESMKDTARVLGRMYDGIEYRGFHQSVVEELAEYAGVPVFNGLTDEFHPTQMLADALTMREHAEKPFHEIKFAYVGDGRNNMGRSLLLLGAKLGMDVRIGAPEGLQPEAELVERCREWAEQSGGKVLVTASAEEAVRDVDFIHTDVWVSMGEPVESWSERVGTLLPFQINDALVKAAGNPRVKVMHCLPAFHNSETAVGAEVAKTYPELANGIEVTESVFESPACIAFDQAENRMHTIKAVLVSSLA</sequence>